<proteinExistence type="inferred from homology"/>
<gene>
    <name evidence="1" type="primary">pgk</name>
    <name type="ordered locus">Francci3_1638</name>
</gene>
<name>PGK_FRACC</name>
<protein>
    <recommendedName>
        <fullName evidence="1">Phosphoglycerate kinase</fullName>
        <ecNumber evidence="1">2.7.2.3</ecNumber>
    </recommendedName>
</protein>
<dbReference type="EC" id="2.7.2.3" evidence="1"/>
<dbReference type="EMBL" id="CP000249">
    <property type="protein sequence ID" value="ABD11014.1"/>
    <property type="molecule type" value="Genomic_DNA"/>
</dbReference>
<dbReference type="RefSeq" id="WP_011436077.1">
    <property type="nucleotide sequence ID" value="NZ_MSEA01000114.1"/>
</dbReference>
<dbReference type="SMR" id="Q2JCH8"/>
<dbReference type="STRING" id="106370.Francci3_1638"/>
<dbReference type="KEGG" id="fra:Francci3_1638"/>
<dbReference type="eggNOG" id="COG0126">
    <property type="taxonomic scope" value="Bacteria"/>
</dbReference>
<dbReference type="HOGENOM" id="CLU_025427_0_2_11"/>
<dbReference type="OrthoDB" id="9808460at2"/>
<dbReference type="PhylomeDB" id="Q2JCH8"/>
<dbReference type="UniPathway" id="UPA00109">
    <property type="reaction ID" value="UER00185"/>
</dbReference>
<dbReference type="Proteomes" id="UP000001937">
    <property type="component" value="Chromosome"/>
</dbReference>
<dbReference type="GO" id="GO:0005829">
    <property type="term" value="C:cytosol"/>
    <property type="evidence" value="ECO:0007669"/>
    <property type="project" value="TreeGrafter"/>
</dbReference>
<dbReference type="GO" id="GO:0043531">
    <property type="term" value="F:ADP binding"/>
    <property type="evidence" value="ECO:0007669"/>
    <property type="project" value="TreeGrafter"/>
</dbReference>
<dbReference type="GO" id="GO:0005524">
    <property type="term" value="F:ATP binding"/>
    <property type="evidence" value="ECO:0007669"/>
    <property type="project" value="UniProtKB-KW"/>
</dbReference>
<dbReference type="GO" id="GO:0004618">
    <property type="term" value="F:phosphoglycerate kinase activity"/>
    <property type="evidence" value="ECO:0007669"/>
    <property type="project" value="UniProtKB-UniRule"/>
</dbReference>
<dbReference type="GO" id="GO:0006094">
    <property type="term" value="P:gluconeogenesis"/>
    <property type="evidence" value="ECO:0007669"/>
    <property type="project" value="TreeGrafter"/>
</dbReference>
<dbReference type="GO" id="GO:0006096">
    <property type="term" value="P:glycolytic process"/>
    <property type="evidence" value="ECO:0007669"/>
    <property type="project" value="UniProtKB-UniRule"/>
</dbReference>
<dbReference type="FunFam" id="3.40.50.1260:FF:000006">
    <property type="entry name" value="Phosphoglycerate kinase"/>
    <property type="match status" value="1"/>
</dbReference>
<dbReference type="FunFam" id="3.40.50.1260:FF:000031">
    <property type="entry name" value="Phosphoglycerate kinase 1"/>
    <property type="match status" value="1"/>
</dbReference>
<dbReference type="Gene3D" id="3.40.50.1260">
    <property type="entry name" value="Phosphoglycerate kinase, N-terminal domain"/>
    <property type="match status" value="2"/>
</dbReference>
<dbReference type="HAMAP" id="MF_00145">
    <property type="entry name" value="Phosphoglyc_kinase"/>
    <property type="match status" value="1"/>
</dbReference>
<dbReference type="InterPro" id="IPR001576">
    <property type="entry name" value="Phosphoglycerate_kinase"/>
</dbReference>
<dbReference type="InterPro" id="IPR015911">
    <property type="entry name" value="Phosphoglycerate_kinase_CS"/>
</dbReference>
<dbReference type="InterPro" id="IPR015824">
    <property type="entry name" value="Phosphoglycerate_kinase_N"/>
</dbReference>
<dbReference type="InterPro" id="IPR036043">
    <property type="entry name" value="Phosphoglycerate_kinase_sf"/>
</dbReference>
<dbReference type="PANTHER" id="PTHR11406">
    <property type="entry name" value="PHOSPHOGLYCERATE KINASE"/>
    <property type="match status" value="1"/>
</dbReference>
<dbReference type="PANTHER" id="PTHR11406:SF23">
    <property type="entry name" value="PHOSPHOGLYCERATE KINASE 1, CHLOROPLASTIC-RELATED"/>
    <property type="match status" value="1"/>
</dbReference>
<dbReference type="Pfam" id="PF00162">
    <property type="entry name" value="PGK"/>
    <property type="match status" value="1"/>
</dbReference>
<dbReference type="PIRSF" id="PIRSF000724">
    <property type="entry name" value="Pgk"/>
    <property type="match status" value="1"/>
</dbReference>
<dbReference type="PRINTS" id="PR00477">
    <property type="entry name" value="PHGLYCKINASE"/>
</dbReference>
<dbReference type="SUPFAM" id="SSF53748">
    <property type="entry name" value="Phosphoglycerate kinase"/>
    <property type="match status" value="1"/>
</dbReference>
<dbReference type="PROSITE" id="PS00111">
    <property type="entry name" value="PGLYCERATE_KINASE"/>
    <property type="match status" value="1"/>
</dbReference>
<keyword id="KW-0067">ATP-binding</keyword>
<keyword id="KW-0963">Cytoplasm</keyword>
<keyword id="KW-0324">Glycolysis</keyword>
<keyword id="KW-0418">Kinase</keyword>
<keyword id="KW-0547">Nucleotide-binding</keyword>
<keyword id="KW-1185">Reference proteome</keyword>
<keyword id="KW-0808">Transferase</keyword>
<feature type="chain" id="PRO_1000192831" description="Phosphoglycerate kinase">
    <location>
        <begin position="1"/>
        <end position="400"/>
    </location>
</feature>
<feature type="binding site" evidence="1">
    <location>
        <begin position="19"/>
        <end position="21"/>
    </location>
    <ligand>
        <name>substrate</name>
    </ligand>
</feature>
<feature type="binding site" evidence="1">
    <location>
        <position position="38"/>
    </location>
    <ligand>
        <name>substrate</name>
    </ligand>
</feature>
<feature type="binding site" evidence="1">
    <location>
        <begin position="61"/>
        <end position="64"/>
    </location>
    <ligand>
        <name>substrate</name>
    </ligand>
</feature>
<feature type="binding site" evidence="1">
    <location>
        <position position="124"/>
    </location>
    <ligand>
        <name>substrate</name>
    </ligand>
</feature>
<feature type="binding site" evidence="1">
    <location>
        <position position="161"/>
    </location>
    <ligand>
        <name>substrate</name>
    </ligand>
</feature>
<feature type="binding site" evidence="1">
    <location>
        <position position="211"/>
    </location>
    <ligand>
        <name>ATP</name>
        <dbReference type="ChEBI" id="CHEBI:30616"/>
    </ligand>
</feature>
<feature type="binding site" evidence="1">
    <location>
        <position position="299"/>
    </location>
    <ligand>
        <name>ATP</name>
        <dbReference type="ChEBI" id="CHEBI:30616"/>
    </ligand>
</feature>
<feature type="binding site" evidence="1">
    <location>
        <position position="330"/>
    </location>
    <ligand>
        <name>ATP</name>
        <dbReference type="ChEBI" id="CHEBI:30616"/>
    </ligand>
</feature>
<feature type="binding site" evidence="1">
    <location>
        <begin position="356"/>
        <end position="359"/>
    </location>
    <ligand>
        <name>ATP</name>
        <dbReference type="ChEBI" id="CHEBI:30616"/>
    </ligand>
</feature>
<sequence length="400" mass="40900">MRTIDDLQVAGHRVLVRSDLNVPLDRSGDTPRITDDGRVRASVPTISALLDRGARVVVSSHLGRPKGEPDPKYSLEPVAGRLAELLGRPVAFAGDGSGDIAGAHAREVVAGLGDGEVALLENLRFAAGETSKDAAIRAAFADELSALAEFYVGDAFGAVHRAHASVADVPKRLPHAAGRLVLTELEVLRRLSSDPARPYSVVLGGSKVSDKLGVIRALLPKVDALLVGGGMCFTFLAALGHGVGGSLLETEMIETCKELLAEGGERIVLPTDVVVADRFAADADTAVVAADAIPAGWLGLDIGPASTELFAARLAGAATVFWNGPMGVFELAPFAAGTRGVAEAVAAGKGFSVVGGGDSAAAVRTLGIPEDAFSHISTGGGASLEYLEGKTLPGLAALDV</sequence>
<evidence type="ECO:0000255" key="1">
    <source>
        <dbReference type="HAMAP-Rule" id="MF_00145"/>
    </source>
</evidence>
<accession>Q2JCH8</accession>
<organism>
    <name type="scientific">Frankia casuarinae (strain DSM 45818 / CECT 9043 / HFP020203 / CcI3)</name>
    <dbReference type="NCBI Taxonomy" id="106370"/>
    <lineage>
        <taxon>Bacteria</taxon>
        <taxon>Bacillati</taxon>
        <taxon>Actinomycetota</taxon>
        <taxon>Actinomycetes</taxon>
        <taxon>Frankiales</taxon>
        <taxon>Frankiaceae</taxon>
        <taxon>Frankia</taxon>
    </lineage>
</organism>
<reference key="1">
    <citation type="journal article" date="2007" name="Genome Res.">
        <title>Genome characteristics of facultatively symbiotic Frankia sp. strains reflect host range and host plant biogeography.</title>
        <authorList>
            <person name="Normand P."/>
            <person name="Lapierre P."/>
            <person name="Tisa L.S."/>
            <person name="Gogarten J.P."/>
            <person name="Alloisio N."/>
            <person name="Bagnarol E."/>
            <person name="Bassi C.A."/>
            <person name="Berry A.M."/>
            <person name="Bickhart D.M."/>
            <person name="Choisne N."/>
            <person name="Couloux A."/>
            <person name="Cournoyer B."/>
            <person name="Cruveiller S."/>
            <person name="Daubin V."/>
            <person name="Demange N."/>
            <person name="Francino M.P."/>
            <person name="Goltsman E."/>
            <person name="Huang Y."/>
            <person name="Kopp O.R."/>
            <person name="Labarre L."/>
            <person name="Lapidus A."/>
            <person name="Lavire C."/>
            <person name="Marechal J."/>
            <person name="Martinez M."/>
            <person name="Mastronunzio J.E."/>
            <person name="Mullin B.C."/>
            <person name="Niemann J."/>
            <person name="Pujic P."/>
            <person name="Rawnsley T."/>
            <person name="Rouy Z."/>
            <person name="Schenowitz C."/>
            <person name="Sellstedt A."/>
            <person name="Tavares F."/>
            <person name="Tomkins J.P."/>
            <person name="Vallenet D."/>
            <person name="Valverde C."/>
            <person name="Wall L.G."/>
            <person name="Wang Y."/>
            <person name="Medigue C."/>
            <person name="Benson D.R."/>
        </authorList>
    </citation>
    <scope>NUCLEOTIDE SEQUENCE [LARGE SCALE GENOMIC DNA]</scope>
    <source>
        <strain>DSM 45818 / CECT 9043 / HFP020203 / CcI3</strain>
    </source>
</reference>
<comment type="catalytic activity">
    <reaction evidence="1">
        <text>(2R)-3-phosphoglycerate + ATP = (2R)-3-phospho-glyceroyl phosphate + ADP</text>
        <dbReference type="Rhea" id="RHEA:14801"/>
        <dbReference type="ChEBI" id="CHEBI:30616"/>
        <dbReference type="ChEBI" id="CHEBI:57604"/>
        <dbReference type="ChEBI" id="CHEBI:58272"/>
        <dbReference type="ChEBI" id="CHEBI:456216"/>
        <dbReference type="EC" id="2.7.2.3"/>
    </reaction>
</comment>
<comment type="pathway">
    <text evidence="1">Carbohydrate degradation; glycolysis; pyruvate from D-glyceraldehyde 3-phosphate: step 2/5.</text>
</comment>
<comment type="subunit">
    <text evidence="1">Monomer.</text>
</comment>
<comment type="subcellular location">
    <subcellularLocation>
        <location evidence="1">Cytoplasm</location>
    </subcellularLocation>
</comment>
<comment type="similarity">
    <text evidence="1">Belongs to the phosphoglycerate kinase family.</text>
</comment>